<evidence type="ECO:0000255" key="1">
    <source>
        <dbReference type="HAMAP-Rule" id="MF_00460"/>
    </source>
</evidence>
<comment type="similarity">
    <text evidence="1">Belongs to the UPF0125 (RnfH) family.</text>
</comment>
<gene>
    <name evidence="1" type="primary">rnfH</name>
    <name type="ordered locus">NMC0748</name>
</gene>
<dbReference type="EMBL" id="AM421808">
    <property type="protein sequence ID" value="CAM10036.1"/>
    <property type="molecule type" value="Genomic_DNA"/>
</dbReference>
<dbReference type="RefSeq" id="WP_002217575.1">
    <property type="nucleotide sequence ID" value="NC_008767.1"/>
</dbReference>
<dbReference type="SMR" id="A1KT54"/>
<dbReference type="KEGG" id="nmc:NMC0748"/>
<dbReference type="HOGENOM" id="CLU_150721_1_0_4"/>
<dbReference type="Proteomes" id="UP000002286">
    <property type="component" value="Chromosome"/>
</dbReference>
<dbReference type="Gene3D" id="3.10.20.280">
    <property type="entry name" value="RnfH-like"/>
    <property type="match status" value="1"/>
</dbReference>
<dbReference type="HAMAP" id="MF_00460">
    <property type="entry name" value="UPF0125_RnfH"/>
    <property type="match status" value="1"/>
</dbReference>
<dbReference type="InterPro" id="IPR016155">
    <property type="entry name" value="Mopterin_synth/thiamin_S_b"/>
</dbReference>
<dbReference type="InterPro" id="IPR005346">
    <property type="entry name" value="RnfH"/>
</dbReference>
<dbReference type="InterPro" id="IPR037021">
    <property type="entry name" value="RnfH_sf"/>
</dbReference>
<dbReference type="NCBIfam" id="NF002490">
    <property type="entry name" value="PRK01777.1"/>
    <property type="match status" value="1"/>
</dbReference>
<dbReference type="PANTHER" id="PTHR37483">
    <property type="entry name" value="UPF0125 PROTEIN RATB"/>
    <property type="match status" value="1"/>
</dbReference>
<dbReference type="PANTHER" id="PTHR37483:SF1">
    <property type="entry name" value="UPF0125 PROTEIN RATB"/>
    <property type="match status" value="1"/>
</dbReference>
<dbReference type="Pfam" id="PF03658">
    <property type="entry name" value="Ub-RnfH"/>
    <property type="match status" value="1"/>
</dbReference>
<dbReference type="SUPFAM" id="SSF54285">
    <property type="entry name" value="MoaD/ThiS"/>
    <property type="match status" value="1"/>
</dbReference>
<protein>
    <recommendedName>
        <fullName evidence="1">Protein RnfH</fullName>
    </recommendedName>
</protein>
<feature type="chain" id="PRO_1000013583" description="Protein RnfH">
    <location>
        <begin position="1"/>
        <end position="92"/>
    </location>
</feature>
<sequence>MLEIEIVYGLPDRQVLKTMQLAEGTTVRAAALQSGLDGIFEDLNLHSAPLGIFGKAVKDDTPLRDGDRIEVYRPLLIDPKEARRKRVQNQEE</sequence>
<name>RNFH_NEIMF</name>
<reference key="1">
    <citation type="journal article" date="2007" name="PLoS Genet.">
        <title>Meningococcal genetic variation mechanisms viewed through comparative analysis of serogroup C strain FAM18.</title>
        <authorList>
            <person name="Bentley S.D."/>
            <person name="Vernikos G.S."/>
            <person name="Snyder L.A.S."/>
            <person name="Churcher C."/>
            <person name="Arrowsmith C."/>
            <person name="Chillingworth T."/>
            <person name="Cronin A."/>
            <person name="Davis P.H."/>
            <person name="Holroyd N.E."/>
            <person name="Jagels K."/>
            <person name="Maddison M."/>
            <person name="Moule S."/>
            <person name="Rabbinowitsch E."/>
            <person name="Sharp S."/>
            <person name="Unwin L."/>
            <person name="Whitehead S."/>
            <person name="Quail M.A."/>
            <person name="Achtman M."/>
            <person name="Barrell B.G."/>
            <person name="Saunders N.J."/>
            <person name="Parkhill J."/>
        </authorList>
    </citation>
    <scope>NUCLEOTIDE SEQUENCE [LARGE SCALE GENOMIC DNA]</scope>
    <source>
        <strain>ATCC 700532 / DSM 15464 / FAM18</strain>
    </source>
</reference>
<accession>A1KT54</accession>
<organism>
    <name type="scientific">Neisseria meningitidis serogroup C / serotype 2a (strain ATCC 700532 / DSM 15464 / FAM18)</name>
    <dbReference type="NCBI Taxonomy" id="272831"/>
    <lineage>
        <taxon>Bacteria</taxon>
        <taxon>Pseudomonadati</taxon>
        <taxon>Pseudomonadota</taxon>
        <taxon>Betaproteobacteria</taxon>
        <taxon>Neisseriales</taxon>
        <taxon>Neisseriaceae</taxon>
        <taxon>Neisseria</taxon>
    </lineage>
</organism>
<proteinExistence type="inferred from homology"/>